<protein>
    <recommendedName>
        <fullName>Mitogen-activated protein kinase HOG1</fullName>
        <shortName>MAP kinase HOG1</shortName>
        <ecNumber evidence="5 9 17 26 44">2.7.11.24</ecNumber>
    </recommendedName>
    <alternativeName>
        <fullName>High osmolarity glycerol response protein 1</fullName>
    </alternativeName>
</protein>
<proteinExistence type="evidence at protein level"/>
<organism>
    <name type="scientific">Saccharomyces cerevisiae (strain ATCC 204508 / S288c)</name>
    <name type="common">Baker's yeast</name>
    <dbReference type="NCBI Taxonomy" id="559292"/>
    <lineage>
        <taxon>Eukaryota</taxon>
        <taxon>Fungi</taxon>
        <taxon>Dikarya</taxon>
        <taxon>Ascomycota</taxon>
        <taxon>Saccharomycotina</taxon>
        <taxon>Saccharomycetes</taxon>
        <taxon>Saccharomycetales</taxon>
        <taxon>Saccharomycetaceae</taxon>
        <taxon>Saccharomyces</taxon>
    </lineage>
</organism>
<sequence length="435" mass="48858">MTTNEEFIRTQIFGTVFEITNRYNDLNPVGMGAFGLVCSATDTLTSQPVAIKKIMKPFSTAVLAKRTYRELKLLKHLRHENLICLQDIFLSPLEDIYFVTELQGTDLHRLLQTRPLEKQFVQYFLYQILRGLKYVHSAGVIHRDLKPSNILINENCDLKICDFGLARIQDPQMTGYVSTRYYRAPEIMLTWQKYDVEVDIWSAGCIFAEMIEGKPLFPGKDHVHQFSIITDLLGSPPKDVINTICSENTLKFVTSLPHRDPIPFSERFKTVEPDAVDLLEKMLVFDPKKRITAADALAHPYSAPYHDPTDEPVADAKFDWHFNDADLPVDTWRVMMYSEILDFHKIGGSDGQIDISATFDDQVAAATAAAAQAQAQAQAQVQLNMAAHSHNGAGTTGNDHSDIAGGNKVSDHVAANDTITDYGNQAIQYANEFQQ</sequence>
<accession>P32485</accession>
<accession>D6VYB1</accession>
<accession>Q06232</accession>
<accession>Q12294</accession>
<name>HOG1_YEAST</name>
<reference key="1">
    <citation type="journal article" date="1993" name="Science">
        <title>An osmosensing signal transduction pathway in yeast.</title>
        <authorList>
            <person name="Brewster J.L."/>
            <person name="de Valoir T."/>
            <person name="Dwyer N.D."/>
            <person name="Winter E."/>
            <person name="Gustin M.C."/>
        </authorList>
    </citation>
    <scope>NUCLEOTIDE SEQUENCE [GENOMIC DNA]</scope>
</reference>
<reference key="2">
    <citation type="journal article" date="1997" name="Yeast">
        <title>Sequence analysis of a 37.6 kbp cosmid clone from the right arm of Saccharomyces cerevisiae chromosome XII, carrying YAP3, HOG1, SNR6, tRNA-Arg3 and 23 new open reading frames, among which several homologies to proteins involved in cell division control and to mammalian growth factors and other animal proteins are found.</title>
        <authorList>
            <person name="Verhasselt P."/>
            <person name="Volckaert G."/>
        </authorList>
    </citation>
    <scope>NUCLEOTIDE SEQUENCE [GENOMIC DNA]</scope>
    <source>
        <strain>ATCC 90840 / EAY235 / FY23</strain>
    </source>
</reference>
<reference key="3">
    <citation type="journal article" date="1997" name="Nature">
        <title>The nucleotide sequence of Saccharomyces cerevisiae chromosome XII.</title>
        <authorList>
            <person name="Johnston M."/>
            <person name="Hillier L.W."/>
            <person name="Riles L."/>
            <person name="Albermann K."/>
            <person name="Andre B."/>
            <person name="Ansorge W."/>
            <person name="Benes V."/>
            <person name="Brueckner M."/>
            <person name="Delius H."/>
            <person name="Dubois E."/>
            <person name="Duesterhoeft A."/>
            <person name="Entian K.-D."/>
            <person name="Floeth M."/>
            <person name="Goffeau A."/>
            <person name="Hebling U."/>
            <person name="Heumann K."/>
            <person name="Heuss-Neitzel D."/>
            <person name="Hilbert H."/>
            <person name="Hilger F."/>
            <person name="Kleine K."/>
            <person name="Koetter P."/>
            <person name="Louis E.J."/>
            <person name="Messenguy F."/>
            <person name="Mewes H.-W."/>
            <person name="Miosga T."/>
            <person name="Moestl D."/>
            <person name="Mueller-Auer S."/>
            <person name="Nentwich U."/>
            <person name="Obermaier B."/>
            <person name="Piravandi E."/>
            <person name="Pohl T.M."/>
            <person name="Portetelle D."/>
            <person name="Purnelle B."/>
            <person name="Rechmann S."/>
            <person name="Rieger M."/>
            <person name="Rinke M."/>
            <person name="Rose M."/>
            <person name="Scharfe M."/>
            <person name="Scherens B."/>
            <person name="Scholler P."/>
            <person name="Schwager C."/>
            <person name="Schwarz S."/>
            <person name="Underwood A.P."/>
            <person name="Urrestarazu L.A."/>
            <person name="Vandenbol M."/>
            <person name="Verhasselt P."/>
            <person name="Vierendeels F."/>
            <person name="Voet M."/>
            <person name="Volckaert G."/>
            <person name="Voss H."/>
            <person name="Wambutt R."/>
            <person name="Wedler E."/>
            <person name="Wedler H."/>
            <person name="Zimmermann F.K."/>
            <person name="Zollner A."/>
            <person name="Hani J."/>
            <person name="Hoheisel J.D."/>
        </authorList>
    </citation>
    <scope>NUCLEOTIDE SEQUENCE [LARGE SCALE GENOMIC DNA]</scope>
    <source>
        <strain>ATCC 204508 / S288c</strain>
    </source>
</reference>
<reference key="4">
    <citation type="journal article" date="2014" name="G3 (Bethesda)">
        <title>The reference genome sequence of Saccharomyces cerevisiae: Then and now.</title>
        <authorList>
            <person name="Engel S.R."/>
            <person name="Dietrich F.S."/>
            <person name="Fisk D.G."/>
            <person name="Binkley G."/>
            <person name="Balakrishnan R."/>
            <person name="Costanzo M.C."/>
            <person name="Dwight S.S."/>
            <person name="Hitz B.C."/>
            <person name="Karra K."/>
            <person name="Nash R.S."/>
            <person name="Weng S."/>
            <person name="Wong E.D."/>
            <person name="Lloyd P."/>
            <person name="Skrzypek M.S."/>
            <person name="Miyasato S.R."/>
            <person name="Simison M."/>
            <person name="Cherry J.M."/>
        </authorList>
    </citation>
    <scope>GENOME REANNOTATION</scope>
    <source>
        <strain>ATCC 204508 / S288c</strain>
    </source>
</reference>
<reference key="5">
    <citation type="journal article" date="1994" name="EMBO J.">
        <title>The HOG pathway controls osmotic regulation of transcription via the stress response element (STRE) of the Saccharomyces cerevisiae CTT1 gene.</title>
        <authorList>
            <person name="Schueller C."/>
            <person name="Brewster J.L."/>
            <person name="Alexander M.R."/>
            <person name="Gustin M.C."/>
            <person name="Ruis H."/>
        </authorList>
    </citation>
    <scope>FUNCTION</scope>
    <scope>PHOSPHORYLATION</scope>
    <scope>MUTAGENESIS OF LYS-52; THR-174 AND TYR-176</scope>
</reference>
<reference key="6">
    <citation type="journal article" date="1996" name="J. Biol. Chem.">
        <title>Purification and characterization of two isoenzymes of DL-glycerol-3-phosphatase from Saccharomyces cerevisiae. Identification of the corresponding GPP1 and GPP2 genes and evidence for osmotic regulation of Gpp2p expression by the osmosensing mitogen-activated protein kinase signal transduction pathway.</title>
        <authorList>
            <person name="Norbeck J."/>
            <person name="Paehlman A.-K."/>
            <person name="Akhtar N."/>
            <person name="Blomberg A."/>
            <person name="Adler L."/>
        </authorList>
    </citation>
    <scope>FUNCTION</scope>
</reference>
<reference key="7">
    <citation type="journal article" date="1996" name="Mol. Cell. Biol.">
        <title>The osmoregulatory pathway represses mating pathway activity in Saccharomyces cerevisiae: isolation of a FUS3 mutant that is insensitive to the repression mechanism.</title>
        <authorList>
            <person name="Hall J.P."/>
            <person name="Cherkasova V."/>
            <person name="Elion E."/>
            <person name="Gustin M.C."/>
            <person name="Winter E."/>
        </authorList>
    </citation>
    <scope>FUNCTION</scope>
    <scope>MUTAGENESIS OF LYS-52</scope>
</reference>
<reference key="8">
    <citation type="journal article" date="1997" name="Mol. Cell. Biol.">
        <title>Regulation of the Saccharomyces cerevisiae HOG1 mitogen-activated protein kinase by the PTP2 and PTP3 protein tyrosine phosphatases.</title>
        <authorList>
            <person name="Wurgler-Murphy S.M."/>
            <person name="Maeda T."/>
            <person name="Witten E.A."/>
            <person name="Saito H."/>
        </authorList>
    </citation>
    <scope>INTERACTION WITH PTP2</scope>
    <scope>ACTIVITY REGULATION</scope>
</reference>
<reference key="9">
    <citation type="journal article" date="1997" name="J. Biol. Chem.">
        <title>Two protein-tyrosine phosphatases inactivate the osmotic stress response pathway in yeast by targeting the mitogen-activated protein kinase, Hog1.</title>
        <authorList>
            <person name="Jacoby T."/>
            <person name="Flanagan H."/>
            <person name="Faykin A."/>
            <person name="Seto A.G."/>
            <person name="Mattison C.P."/>
            <person name="Ota I.M."/>
        </authorList>
    </citation>
    <scope>INTERACTION WITH PTP2 AND PTP3</scope>
    <scope>ACTIVITY REGULATION</scope>
</reference>
<reference key="10">
    <citation type="journal article" date="1998" name="Genes Dev.">
        <title>The Hog1 MAPK prevents cross talk between the HOG and pheromone response MAPK pathways in Saccharomyces cerevisiae.</title>
        <authorList>
            <person name="O'Rourke S.M."/>
            <person name="Herskowitz I."/>
        </authorList>
    </citation>
    <scope>FUNCTION</scope>
</reference>
<reference key="11">
    <citation type="journal article" date="1998" name="J. Cell Biol.">
        <title>The high osmolarity glycerol response (HOG) MAP kinase pathway controls localization of a yeast Golgi glycosyltransferase.</title>
        <authorList>
            <person name="Reynolds T.B."/>
            <person name="Hopkins B.D."/>
            <person name="Lyons M.R."/>
            <person name="Graham T.R."/>
        </authorList>
    </citation>
    <scope>FUNCTION</scope>
</reference>
<reference key="12">
    <citation type="journal article" date="1999" name="Mol. Biol. Cell">
        <title>Kinase activity-dependent nuclear export opposes stress-induced nuclear accumulation and retention of Hog1 mitogen-activated protein kinase in the budding yeast Saccharomyces cerevisiae.</title>
        <authorList>
            <person name="Reiser V."/>
            <person name="Ruis H."/>
            <person name="Ammerer G."/>
        </authorList>
    </citation>
    <scope>FUNCTION</scope>
    <scope>SUBCELLULAR LOCATION</scope>
    <scope>PHOSPHORYLATION</scope>
</reference>
<reference key="13">
    <citation type="journal article" date="2000" name="EMBO J.">
        <title>Yeast Cdc42 GTPase and Ste20 PAK-like kinase regulate Sho1-dependent activation of the Hog1 MAPK pathway.</title>
        <authorList>
            <person name="Raitt D.C."/>
            <person name="Posas F."/>
            <person name="Saito H."/>
        </authorList>
    </citation>
    <scope>FUNCTION</scope>
</reference>
<reference key="14">
    <citation type="journal article" date="2000" name="Genes Dev.">
        <title>Two protein tyrosine phosphatases, Ptp2 and Ptp3, modulate the subcellular localization of the Hog1 MAP kinase in yeast.</title>
        <authorList>
            <person name="Mattison C.P."/>
            <person name="Ota I.M."/>
        </authorList>
    </citation>
    <scope>SUBCELLULAR LOCATION</scope>
</reference>
<reference key="15">
    <citation type="journal article" date="2000" name="Mol. Cell. Biol.">
        <title>Rck2 kinase is a substrate for the osmotic stress-activated mitogen-activated protein kinase Hog1.</title>
        <authorList>
            <person name="Bilsland-Marchesan E."/>
            <person name="Arino J."/>
            <person name="Saito H."/>
            <person name="Sunnerhagen P."/>
            <person name="Posas F."/>
        </authorList>
    </citation>
    <scope>FUNCTION</scope>
    <scope>INTERACTION WITH RCK2</scope>
    <scope>CATALYTIC ACTIVITY</scope>
</reference>
<reference key="16">
    <citation type="journal article" date="2001" name="EMBO J.">
        <title>Regulation of the Sko1 transcriptional repressor by the Hog1 MAP kinase in response to osmotic stress.</title>
        <authorList>
            <person name="Proft M."/>
            <person name="Pascual-Ahuir A."/>
            <person name="de Nadal E."/>
            <person name="Arino J."/>
            <person name="Serrano R."/>
            <person name="Posas F."/>
        </authorList>
    </citation>
    <scope>FUNCTION</scope>
    <scope>PHOSPHORYLATION</scope>
    <scope>CATALYTIC ACTIVITY</scope>
    <scope>INTERACTION WITH SKO1</scope>
</reference>
<reference key="17">
    <citation type="journal article" date="2001" name="Genes Genet. Syst.">
        <title>Defects in glycosylphosphatidylinositol (GPI) anchor synthesis activate Hog1 kinase and confer copper-resistance in Saccharomyces cerevisisae.</title>
        <authorList>
            <person name="Toh-e A."/>
            <person name="Oguchi T."/>
        </authorList>
    </citation>
    <scope>FUNCTION</scope>
</reference>
<reference key="18">
    <citation type="journal article" date="2001" name="J. Biol. Chem.">
        <title>Isolation of hyperactive mutants of the MAPK p38/Hog1 that are independent of MAPK kinase activation.</title>
        <authorList>
            <person name="Bell M."/>
            <person name="Capone R."/>
            <person name="Pashtan I."/>
            <person name="Levitzki A."/>
            <person name="Engelberg D."/>
        </authorList>
    </citation>
    <scope>MUTAGENESIS OF TYR-68; ASP-170; ALA-314; PHE-318; TRP-320; PHE-322; TRP-332 AND ASN-391</scope>
</reference>
<reference key="19">
    <citation type="journal article" date="2001" name="Mol. Cell">
        <title>Stress-induced map kinase Hog1 is part of transcription activation complexes.</title>
        <authorList>
            <person name="Alepuz P.M."/>
            <person name="Jovanovic A."/>
            <person name="Reiser V."/>
            <person name="Ammerer G."/>
        </authorList>
    </citation>
    <scope>FUNCTION</scope>
</reference>
<reference key="20">
    <citation type="journal article" date="2001" name="Mol. Cell. Biol.">
        <title>Ptc1, a type 2C Ser/Thr phosphatase, inactivates the HOG pathway by dephosphorylating the mitogen-activated protein kinase Hog1.</title>
        <authorList>
            <person name="Warmka J."/>
            <person name="Hanneman J."/>
            <person name="Lee J."/>
            <person name="Amin D."/>
            <person name="Ota I.M."/>
        </authorList>
    </citation>
    <scope>ACTIVITY REGULATION</scope>
</reference>
<reference key="21">
    <citation type="journal article" date="2001" name="Mol. Microbiol.">
        <title>Low external pH induces HOG1-dependent changes in the organization of the Saccharomyces cerevisiae cell wall.</title>
        <authorList>
            <person name="Kapteyn J.C."/>
            <person name="ter Riet B."/>
            <person name="Vink E."/>
            <person name="Blad S."/>
            <person name="De Nobel H."/>
            <person name="Van Den Ende H."/>
            <person name="Klis F.M."/>
        </authorList>
    </citation>
    <scope>FUNCTION</scope>
</reference>
<reference key="22">
    <citation type="journal article" date="2002" name="Eukaryot. Cell">
        <title>Heat stress activates the yeast high-osmolarity glycerol mitogen-activated protein kinase pathway, and protein tyrosine phosphatases are essential under heat stress.</title>
        <authorList>
            <person name="Winkler A."/>
            <person name="Arkind C."/>
            <person name="Mattison C.P."/>
            <person name="Burkholder A."/>
            <person name="Knoche K."/>
            <person name="Ota I.M."/>
        </authorList>
    </citation>
    <scope>ACTIVITY REGULATION</scope>
</reference>
<reference key="23">
    <citation type="journal article" date="2002" name="Eukaryot. Cell">
        <title>Role of Ptc2 type 2C Ser/Thr phosphatase in yeast high-osmolarity glycerol pathway inactivation.</title>
        <authorList>
            <person name="Young C."/>
            <person name="Mapes J."/>
            <person name="Hanneman J."/>
            <person name="Al-Zarban S."/>
            <person name="Ota I.M."/>
        </authorList>
    </citation>
    <scope>ACTIVITY REGULATION</scope>
</reference>
<reference key="24">
    <citation type="journal article" date="2002" name="J. Biol. Chem.">
        <title>Transient inhibition of translation initiation by osmotic stress.</title>
        <authorList>
            <person name="Uesono Y."/>
            <person name="Toh-e A."/>
        </authorList>
    </citation>
    <scope>FUNCTION</scope>
</reference>
<reference key="25">
    <citation type="journal article" date="2002" name="Mol. Cell">
        <title>Hog1 kinase converts the Sko1-Cyc8-Tup1 repressor complex into an activator that recruits SAGA and SWI/SNF in response to osmotic stress.</title>
        <authorList>
            <person name="Proft M."/>
            <person name="Struhl K."/>
        </authorList>
    </citation>
    <scope>FUNCTION</scope>
</reference>
<reference key="26">
    <citation type="journal article" date="2003" name="EMBO J.">
        <title>Osmostress-induced transcription by Hot1 depends on a Hog1-mediated recruitment of the RNA Pol II.</title>
        <authorList>
            <person name="Alepuz P.M."/>
            <person name="de Nadal E."/>
            <person name="Zapater M."/>
            <person name="Ammerer G."/>
            <person name="Posas F."/>
        </authorList>
    </citation>
    <scope>FUNCTION</scope>
    <scope>INTERACTION WITH HOT1; KIN28; RBP1 AND SIN4</scope>
</reference>
<reference key="27">
    <citation type="journal article" date="2003" name="J. Biol. Chem.">
        <title>Phosphorylation of Tyr-176 of the yeast MAPK Hog1/p38 is not vital for Hog1 biological activity.</title>
        <authorList>
            <person name="Bell M."/>
            <person name="Engelberg D."/>
        </authorList>
    </citation>
    <scope>PHOSPHORYLATION AT THR-174 AND TYR-176</scope>
    <scope>MUTAGENESIS OF THR-174 AND TYR-176</scope>
</reference>
<reference key="28">
    <citation type="journal article" date="2003" name="Mol. Cell. Biol.">
        <title>Targeting the MEF2-like transcription factor Smp1 by the stress-activated Hog1 mitogen-activated protein kinase.</title>
        <authorList>
            <person name="de Nadal E."/>
            <person name="Casadome L."/>
            <person name="Posas F."/>
        </authorList>
    </citation>
    <scope>FUNCTION</scope>
    <scope>INTERACTION WITH SMP1</scope>
</reference>
<reference key="29">
    <citation type="journal article" date="2003" name="Nature">
        <title>Global analysis of protein localization in budding yeast.</title>
        <authorList>
            <person name="Huh W.-K."/>
            <person name="Falvo J.V."/>
            <person name="Gerke L.C."/>
            <person name="Carroll A.S."/>
            <person name="Howson R.W."/>
            <person name="Weissman J.S."/>
            <person name="O'Shea E.K."/>
        </authorList>
    </citation>
    <scope>SUBCELLULAR LOCATION [LARGE SCALE ANALYSIS]</scope>
</reference>
<reference key="30">
    <citation type="journal article" date="2003" name="Nature">
        <title>Global analysis of protein expression in yeast.</title>
        <authorList>
            <person name="Ghaemmaghami S."/>
            <person name="Huh W.-K."/>
            <person name="Bower K."/>
            <person name="Howson R.W."/>
            <person name="Belle A."/>
            <person name="Dephoure N."/>
            <person name="O'Shea E.K."/>
            <person name="Weissman J.S."/>
        </authorList>
    </citation>
    <scope>LEVEL OF PROTEIN EXPRESSION [LARGE SCALE ANALYSIS]</scope>
</reference>
<reference key="31">
    <citation type="journal article" date="2004" name="Biochem. J.">
        <title>Expression of YAP4 in Saccharomyces cerevisiae under osmotic stress.</title>
        <authorList>
            <person name="Nevitt T."/>
            <person name="Pereira J."/>
            <person name="Azevedo D."/>
            <person name="Guerreiro P."/>
            <person name="Rodrigues-Pousada C."/>
        </authorList>
    </citation>
    <scope>FUNCTION</scope>
</reference>
<reference key="32">
    <citation type="journal article" date="2004" name="EMBO J.">
        <title>Nbp2 targets the Ptc1-type 2C Ser/Thr phosphatase to the HOG MAPK pathway.</title>
        <authorList>
            <person name="Mapes J."/>
            <person name="Ota I.M."/>
        </authorList>
    </citation>
    <scope>ACTIVITY REGULATION</scope>
</reference>
<reference key="33">
    <citation type="journal article" date="2004" name="DNA Repair">
        <title>The Hog1 MAP kinase pathway and the Mec1 DNA damage checkpoint pathway independently control the cellular responses to hydrogen peroxide.</title>
        <authorList>
            <person name="Haghnazari E."/>
            <person name="Heyer W.-D."/>
        </authorList>
    </citation>
    <scope>FUNCTION</scope>
</reference>
<reference key="34">
    <citation type="journal article" date="2004" name="Mol. Cell. Biol.">
        <title>Evidence of a new role for the high-osmolarity glycerol mitogen-activated protein kinase pathway in yeast: regulating adaptation to citric acid stress.</title>
        <authorList>
            <person name="Lawrence C.L."/>
            <person name="Botting C.H."/>
            <person name="Antrobus R."/>
            <person name="Coote P.J."/>
        </authorList>
    </citation>
    <scope>FUNCTION</scope>
    <scope>PHOSPHORYLATION</scope>
</reference>
<reference key="35">
    <citation type="journal article" date="2004" name="Nature">
        <title>The MAPK Hog1 recruits Rpd3 histone deacetylase to activate osmoresponsive genes.</title>
        <authorList>
            <person name="De Nadal E."/>
            <person name="Zapater M."/>
            <person name="Alepuz P.M."/>
            <person name="Sumoy L."/>
            <person name="Mas G."/>
            <person name="Posas F."/>
        </authorList>
    </citation>
    <scope>FUNCTION</scope>
    <scope>INTERACTION WITH RPD3</scope>
</reference>
<reference key="36">
    <citation type="journal article" date="2004" name="Nat. Cell Biol.">
        <title>Hog1 mediates cell-cycle arrest in G1 phase by the dual targeting of Sic1.</title>
        <authorList>
            <person name="Escote X."/>
            <person name="Zapater M."/>
            <person name="Clotet J."/>
            <person name="Posas F."/>
        </authorList>
    </citation>
    <scope>FUNCTION</scope>
    <scope>CATALYTIC ACTIVITY</scope>
    <scope>INTERACTION WITH SIC1</scope>
</reference>
<reference key="37">
    <citation type="journal article" date="2005" name="Biochem. Biophys. Res. Commun.">
        <title>Evidence that C-terminal non-kinase domain of Pbs2p has a role in high osmolarity-induced nuclear localization of Hog1p.</title>
        <authorList>
            <person name="Sharma P."/>
            <person name="Mondal A.K."/>
        </authorList>
    </citation>
    <scope>SUBCELLULAR LOCATION</scope>
    <scope>PHOSPHORYLATION</scope>
</reference>
<reference key="38">
    <citation type="journal article" date="2005" name="Mol. Cell. Biol.">
        <title>p38 mitogen-activated protein kinase/Hog1p regulates translation of the AU-rich-element-bearing MFA2 transcript.</title>
        <authorList>
            <person name="Vasudevan S."/>
            <person name="Garneau N."/>
            <person name="Tu Khounh D."/>
            <person name="Peltz S.W."/>
        </authorList>
    </citation>
    <scope>FUNCTION</scope>
</reference>
<reference key="39">
    <citation type="journal article" date="2005" name="Mol. Microbiol.">
        <title>The HOG MAP kinase pathway is required for the induction of methylglyoxal-responsive genes and determines methylglyoxal resistance in Saccharomyces cerevisiae.</title>
        <authorList>
            <person name="Aguilera J."/>
            <person name="Rodriguez-Vargas S."/>
            <person name="Prieto J.A."/>
        </authorList>
    </citation>
    <scope>FUNCTION</scope>
</reference>
<reference key="40">
    <citation type="journal article" date="2006" name="Biochem. J.">
        <title>In yeast, loss of Hog1 leads to osmosensitivity of autophagy.</title>
        <authorList>
            <person name="Prick T."/>
            <person name="Thumm M."/>
            <person name="Koehrer K."/>
            <person name="Haeussinger D."/>
            <person name="Vom Dahl S."/>
        </authorList>
    </citation>
    <scope>FUNCTION</scope>
</reference>
<reference key="41">
    <citation type="journal article" date="2006" name="EMBO J.">
        <title>Phosphorylation of Hsl1 by Hog1 leads to a G2 arrest essential for cell survival at high osmolarity.</title>
        <authorList>
            <person name="Clotet J."/>
            <person name="Escote X."/>
            <person name="Adrover M.A."/>
            <person name="Yaakov G."/>
            <person name="Gari E."/>
            <person name="Aldea M."/>
            <person name="de Nadal E."/>
            <person name="Posas F."/>
        </authorList>
    </citation>
    <scope>FUNCTION</scope>
</reference>
<reference key="42">
    <citation type="journal article" date="2006" name="Eukaryot. Cell">
        <title>Genome-scale analysis reveals Sst2 as the principal regulator of mating pheromone signaling in the yeast Saccharomyces cerevisiae.</title>
        <authorList>
            <person name="Chasse S.A."/>
            <person name="Flanary P."/>
            <person name="Parnell S.C."/>
            <person name="Hao N."/>
            <person name="Cha J.Y."/>
            <person name="Siderovski D.P."/>
            <person name="Dohlman H.G."/>
        </authorList>
    </citation>
    <scope>PHOSPHORYLATION</scope>
</reference>
<reference key="43">
    <citation type="journal article" date="2006" name="Eukaryot. Cell">
        <title>Analysis of mitogen-activated protein kinase signaling specificity in response to hyperosmotic stress: use of an analog-sensitive HOG1 allele.</title>
        <authorList>
            <person name="Westfall P.J."/>
            <person name="Thorner J."/>
        </authorList>
    </citation>
    <scope>FUNCTION</scope>
    <scope>PHOSPHORYLATION</scope>
    <scope>SUBCELLULAR LOCATION</scope>
    <scope>MUTAGENESIS OF LYS-52 AND ASP-144</scope>
</reference>
<reference key="44">
    <citation type="journal article" date="2006" name="Eukaryot. Cell">
        <title>Mitogen-activated protein kinase Hog1 is essential for the response to arsenite in Saccharomyces cerevisiae.</title>
        <authorList>
            <person name="Sotelo J."/>
            <person name="Rodriguez-Gabriel M.A."/>
        </authorList>
    </citation>
    <scope>FUNCTION</scope>
    <scope>PHOSPHORYLATION</scope>
</reference>
<reference key="45">
    <citation type="journal article" date="2006" name="J. Biol. Chem.">
        <title>A downshift in temperature activates the high osmolarity glycerol (HOG) pathway, which determines freeze tolerance in Saccharomyces cerevisiae.</title>
        <authorList>
            <person name="Panadero J."/>
            <person name="Pallotti C."/>
            <person name="Rodriguez-Vargas S."/>
            <person name="Randez-Gil F."/>
            <person name="Prieto J.A."/>
        </authorList>
    </citation>
    <scope>FUNCTION</scope>
    <scope>PHOSPHORYLATION</scope>
</reference>
<reference key="46">
    <citation type="journal article" date="2006" name="J. Biol. Chem.">
        <title>Saccharomyces cerevisiae Hog1 protein phosphorylation upon exposure to bacterial endotoxin.</title>
        <authorList>
            <person name="Marques J.M."/>
            <person name="Rodrigues R.J."/>
            <person name="de Magalhaes-Sant'ana A.C."/>
            <person name="Goncalves T."/>
        </authorList>
    </citation>
    <scope>FUNCTION</scope>
    <scope>INDUCTION</scope>
    <scope>PHOSPHORYLATION</scope>
    <scope>SUBCELLULAR LOCATION</scope>
</reference>
<reference key="47">
    <citation type="journal article" date="2006" name="Mol. Biol. Cell">
        <title>The MAPK Hog1p modulates Fps1p-dependent arsenite uptake and tolerance in yeast.</title>
        <authorList>
            <person name="Thorsen M."/>
            <person name="Di Y."/>
            <person name="Taengemo C."/>
            <person name="Morillas M."/>
            <person name="Ahmadpour D."/>
            <person name="Van der Does C."/>
            <person name="Wagner A."/>
            <person name="Johansson E."/>
            <person name="Boman J."/>
            <person name="Posas F."/>
            <person name="Wysocki R."/>
            <person name="Tamas M.J."/>
        </authorList>
    </citation>
    <scope>FUNCTION</scope>
    <scope>PHOSPHORYLATION</scope>
    <scope>SUBCELLULAR LOCATION</scope>
</reference>
<reference key="48">
    <citation type="journal article" date="2006" name="Mol. Cell">
        <title>The stress-activated Hog1 kinase is a selective transcriptional elongation factor for genes responding to osmotic stress.</title>
        <authorList>
            <person name="Proft M."/>
            <person name="Mas G."/>
            <person name="de Nadal E."/>
            <person name="Vendrell A."/>
            <person name="Noriega N."/>
            <person name="Struhl K."/>
            <person name="Posas F."/>
        </authorList>
    </citation>
    <scope>FUNCTION</scope>
    <scope>INTERACTION WITH RPB1</scope>
</reference>
<reference key="49">
    <citation type="journal article" date="2007" name="Curr. Biol.">
        <title>A systems-biology analysis of feedback inhibition in the Sho1 osmotic-stress-response pathway.</title>
        <authorList>
            <person name="Hao N."/>
            <person name="Behar M."/>
            <person name="Parnell S.C."/>
            <person name="Torres M.P."/>
            <person name="Borchers C.H."/>
            <person name="Elston T.C."/>
            <person name="Dohlman H.G."/>
        </authorList>
    </citation>
    <scope>FUNCTION</scope>
    <scope>MUTAGENESIS OF LYS-52</scope>
</reference>
<reference key="50">
    <citation type="journal article" date="2007" name="Eukaryot. Cell">
        <title>Cdc37p is required for stress-induced high-osmolarity glycerol and protein kinase C mitogen-activated protein kinase pathway functionality by interaction with Hog1p and Slt2p (Mpk1p).</title>
        <authorList>
            <person name="Hawle P."/>
            <person name="Horst D."/>
            <person name="Bebelman J.-P."/>
            <person name="Yang X.X."/>
            <person name="Siderius M."/>
            <person name="van der Vies S.M."/>
        </authorList>
    </citation>
    <scope>FUNCTION</scope>
    <scope>INTERACTION WITH CDC37</scope>
    <scope>PHOSPHORYLATION</scope>
</reference>
<reference key="51">
    <citation type="journal article" date="2007" name="FEBS Lett.">
        <title>Dissecting yeast Hog1 MAP kinase pathway using a chemical genetic approach.</title>
        <authorList>
            <person name="Kim S."/>
            <person name="Shah K."/>
        </authorList>
    </citation>
    <scope>FUNCTION</scope>
    <scope>PHOSPHORYLATION</scope>
</reference>
<reference key="52">
    <citation type="journal article" date="2007" name="Mol. Biol. Cell">
        <title>Plc1p is required for SAGA recruitment and derepression of Sko1p-regulated genes.</title>
        <authorList>
            <person name="Guha N."/>
            <person name="Desai P."/>
            <person name="Vancura A."/>
        </authorList>
    </citation>
    <scope>FUNCTION</scope>
</reference>
<reference key="53">
    <citation type="journal article" date="2008" name="Mol. Cell. Proteomics">
        <title>A multidimensional chromatography technology for in-depth phosphoproteome analysis.</title>
        <authorList>
            <person name="Albuquerque C.P."/>
            <person name="Smolka M.B."/>
            <person name="Payne S.H."/>
            <person name="Bafna V."/>
            <person name="Eng J."/>
            <person name="Zhou H."/>
        </authorList>
    </citation>
    <scope>IDENTIFICATION BY MASS SPECTROMETRY [LARGE SCALE ANALYSIS]</scope>
</reference>
<reference key="54">
    <citation type="journal article" date="2009" name="Science">
        <title>Global analysis of Cdk1 substrate phosphorylation sites provides insights into evolution.</title>
        <authorList>
            <person name="Holt L.J."/>
            <person name="Tuch B.B."/>
            <person name="Villen J."/>
            <person name="Johnson A.D."/>
            <person name="Gygi S.P."/>
            <person name="Morgan D.O."/>
        </authorList>
    </citation>
    <scope>PHOSPHORYLATION [LARGE SCALE ANALYSIS] AT TYR-176</scope>
    <scope>IDENTIFICATION BY MASS SPECTROMETRY [LARGE SCALE ANALYSIS]</scope>
</reference>
<reference key="55">
    <citation type="journal article" date="2012" name="Proc. Natl. Acad. Sci. U.S.A.">
        <title>N-terminal acetylome analyses and functional insights of the N-terminal acetyltransferase NatB.</title>
        <authorList>
            <person name="Van Damme P."/>
            <person name="Lasa M."/>
            <person name="Polevoda B."/>
            <person name="Gazquez C."/>
            <person name="Elosegui-Artola A."/>
            <person name="Kim D.S."/>
            <person name="De Juan-Pardo E."/>
            <person name="Demeyer K."/>
            <person name="Hole K."/>
            <person name="Larrea E."/>
            <person name="Timmerman E."/>
            <person name="Prieto J."/>
            <person name="Arnesen T."/>
            <person name="Sherman F."/>
            <person name="Gevaert K."/>
            <person name="Aldabe R."/>
        </authorList>
    </citation>
    <scope>ACETYLATION [LARGE SCALE ANALYSIS] AT THR-2</scope>
    <scope>CLEAVAGE OF INITIATOR METHIONINE [LARGE SCALE ANALYSIS]</scope>
    <scope>IDENTIFICATION BY MASS SPECTROMETRY [LARGE SCALE ANALYSIS]</scope>
</reference>
<reference key="56">
    <citation type="journal article" date="2019" name="Sci. Signal.">
        <title>Thiol-based direct threat sensing by the stress-activated protein kinase Hog1.</title>
        <authorList>
            <person name="Guerra-Moreno A."/>
            <person name="Prado M.A."/>
            <person name="Ang J."/>
            <person name="Schnell H.M."/>
            <person name="Micoogullari Y."/>
            <person name="Paulo J.A."/>
            <person name="Finley D."/>
            <person name="Gygi S.P."/>
            <person name="Hanna J."/>
        </authorList>
    </citation>
    <scope>FUNCTION</scope>
    <scope>ARSENIC-BINDING</scope>
    <scope>MUTAGENESIS OF CYS-156; CYS-161 AND CYS-205</scope>
    <scope>DISRUPTION PHENOTYPE</scope>
    <scope>SUBCELLULAR LOCATION</scope>
</reference>
<reference key="57">
    <citation type="journal article" date="2024" name="FEBS J.">
        <title>Proline-directed yeast and human MAP kinases phosphorylate the Dot1p/DOT1L histone H3K79 methyltransferase.</title>
        <authorList>
            <person name="Separovich R.J."/>
            <person name="Karakatsanis N.M."/>
            <person name="Gao K."/>
            <person name="Fuh D."/>
            <person name="Hamey J.J."/>
            <person name="Wilkins M.R."/>
        </authorList>
    </citation>
    <scope>FUNCTION</scope>
    <scope>CATALYTIC ACTIVITY</scope>
    <scope>PHOSPHORYLATION AT THR-174 AND TYR-176</scope>
    <scope>DISRUPTION PHENOTYPE</scope>
    <scope>MUTAGENESIS OF LYS-52 AND ASP-144</scope>
</reference>
<keyword id="KW-0007">Acetylation</keyword>
<keyword id="KW-0010">Activator</keyword>
<keyword id="KW-0067">ATP-binding</keyword>
<keyword id="KW-0963">Cytoplasm</keyword>
<keyword id="KW-0418">Kinase</keyword>
<keyword id="KW-0547">Nucleotide-binding</keyword>
<keyword id="KW-0539">Nucleus</keyword>
<keyword id="KW-0597">Phosphoprotein</keyword>
<keyword id="KW-1185">Reference proteome</keyword>
<keyword id="KW-0723">Serine/threonine-protein kinase</keyword>
<keyword id="KW-0804">Transcription</keyword>
<keyword id="KW-0805">Transcription regulation</keyword>
<keyword id="KW-0808">Transferase</keyword>
<gene>
    <name type="primary">HOG1</name>
    <name type="synonym">SSK3</name>
    <name type="ordered locus">YLR113W</name>
    <name type="ORF">L2931</name>
    <name type="ORF">L9354.2</name>
</gene>
<dbReference type="EC" id="2.7.11.24" evidence="5 9 17 26 44"/>
<dbReference type="EMBL" id="L06279">
    <property type="protein sequence ID" value="AAA34680.1"/>
    <property type="molecule type" value="Genomic_DNA"/>
</dbReference>
<dbReference type="EMBL" id="U53878">
    <property type="protein sequence ID" value="AAB67558.1"/>
    <property type="molecule type" value="Genomic_DNA"/>
</dbReference>
<dbReference type="EMBL" id="Z73285">
    <property type="protein sequence ID" value="CAA97680.1"/>
    <property type="molecule type" value="Genomic_DNA"/>
</dbReference>
<dbReference type="EMBL" id="X89514">
    <property type="protein sequence ID" value="CAA61691.1"/>
    <property type="molecule type" value="Genomic_DNA"/>
</dbReference>
<dbReference type="EMBL" id="BK006945">
    <property type="protein sequence ID" value="DAA09427.1"/>
    <property type="molecule type" value="Genomic_DNA"/>
</dbReference>
<dbReference type="PIR" id="S64950">
    <property type="entry name" value="S64950"/>
</dbReference>
<dbReference type="RefSeq" id="NP_013214.1">
    <property type="nucleotide sequence ID" value="NM_001182000.1"/>
</dbReference>
<dbReference type="SMR" id="P32485"/>
<dbReference type="BioGRID" id="31384">
    <property type="interactions" value="701"/>
</dbReference>
<dbReference type="DIP" id="DIP-1558N"/>
<dbReference type="ELM" id="P32485"/>
<dbReference type="FunCoup" id="P32485">
    <property type="interactions" value="994"/>
</dbReference>
<dbReference type="IntAct" id="P32485">
    <property type="interactions" value="38"/>
</dbReference>
<dbReference type="MINT" id="P32485"/>
<dbReference type="STRING" id="4932.YLR113W"/>
<dbReference type="ChEMBL" id="CHEMBL4296003"/>
<dbReference type="iPTMnet" id="P32485"/>
<dbReference type="PaxDb" id="4932-YLR113W"/>
<dbReference type="PeptideAtlas" id="P32485"/>
<dbReference type="EnsemblFungi" id="YLR113W_mRNA">
    <property type="protein sequence ID" value="YLR113W"/>
    <property type="gene ID" value="YLR113W"/>
</dbReference>
<dbReference type="GeneID" id="850803"/>
<dbReference type="KEGG" id="sce:YLR113W"/>
<dbReference type="AGR" id="SGD:S000004103"/>
<dbReference type="SGD" id="S000004103">
    <property type="gene designation" value="HOG1"/>
</dbReference>
<dbReference type="VEuPathDB" id="FungiDB:YLR113W"/>
<dbReference type="eggNOG" id="KOG0660">
    <property type="taxonomic scope" value="Eukaryota"/>
</dbReference>
<dbReference type="GeneTree" id="ENSGT00940000170951"/>
<dbReference type="HOGENOM" id="CLU_000288_181_1_1"/>
<dbReference type="InParanoid" id="P32485"/>
<dbReference type="OMA" id="NRYTDLN"/>
<dbReference type="OrthoDB" id="192887at2759"/>
<dbReference type="BioCyc" id="YEAST:G3O-32258-MONOMER"/>
<dbReference type="BRENDA" id="2.7.11.24">
    <property type="organism ID" value="984"/>
</dbReference>
<dbReference type="Reactome" id="R-SCE-193648">
    <property type="pathway name" value="NRAGE signals death through JNK"/>
</dbReference>
<dbReference type="Reactome" id="R-SCE-198753">
    <property type="pathway name" value="ERK/MAPK targets"/>
</dbReference>
<dbReference type="Reactome" id="R-SCE-2559580">
    <property type="pathway name" value="Oxidative Stress Induced Senescence"/>
</dbReference>
<dbReference type="Reactome" id="R-SCE-2871796">
    <property type="pathway name" value="FCERI mediated MAPK activation"/>
</dbReference>
<dbReference type="Reactome" id="R-SCE-418592">
    <property type="pathway name" value="ADP signalling through P2Y purinoceptor 1"/>
</dbReference>
<dbReference type="Reactome" id="R-SCE-432142">
    <property type="pathway name" value="Platelet sensitization by LDL"/>
</dbReference>
<dbReference type="Reactome" id="R-SCE-450321">
    <property type="pathway name" value="JNK (c-Jun kinases) phosphorylation and activation mediated by activated human TAK1"/>
</dbReference>
<dbReference type="Reactome" id="R-SCE-450341">
    <property type="pathway name" value="Activation of the AP-1 family of transcription factors"/>
</dbReference>
<dbReference type="Reactome" id="R-SCE-525793">
    <property type="pathway name" value="Myogenesis"/>
</dbReference>
<dbReference type="Reactome" id="R-SCE-6798695">
    <property type="pathway name" value="Neutrophil degranulation"/>
</dbReference>
<dbReference type="Reactome" id="R-SCE-9007892">
    <property type="pathway name" value="Interleukin-38 signaling"/>
</dbReference>
<dbReference type="BioGRID-ORCS" id="850803">
    <property type="hits" value="3 hits in 13 CRISPR screens"/>
</dbReference>
<dbReference type="PRO" id="PR:P32485"/>
<dbReference type="Proteomes" id="UP000002311">
    <property type="component" value="Chromosome XII"/>
</dbReference>
<dbReference type="RNAct" id="P32485">
    <property type="molecule type" value="protein"/>
</dbReference>
<dbReference type="GO" id="GO:0005737">
    <property type="term" value="C:cytoplasm"/>
    <property type="evidence" value="ECO:0000314"/>
    <property type="project" value="SGD"/>
</dbReference>
<dbReference type="GO" id="GO:0005634">
    <property type="term" value="C:nucleus"/>
    <property type="evidence" value="ECO:0000314"/>
    <property type="project" value="SGD"/>
</dbReference>
<dbReference type="GO" id="GO:0005524">
    <property type="term" value="F:ATP binding"/>
    <property type="evidence" value="ECO:0007669"/>
    <property type="project" value="UniProtKB-KW"/>
</dbReference>
<dbReference type="GO" id="GO:0005516">
    <property type="term" value="F:calmodulin binding"/>
    <property type="evidence" value="ECO:0000353"/>
    <property type="project" value="SGD"/>
</dbReference>
<dbReference type="GO" id="GO:0003682">
    <property type="term" value="F:chromatin binding"/>
    <property type="evidence" value="ECO:0000314"/>
    <property type="project" value="SGD"/>
</dbReference>
<dbReference type="GO" id="GO:0004707">
    <property type="term" value="F:MAP kinase activity"/>
    <property type="evidence" value="ECO:0000314"/>
    <property type="project" value="SGD"/>
</dbReference>
<dbReference type="GO" id="GO:0106310">
    <property type="term" value="F:protein serine kinase activity"/>
    <property type="evidence" value="ECO:0007669"/>
    <property type="project" value="RHEA"/>
</dbReference>
<dbReference type="GO" id="GO:0004674">
    <property type="term" value="F:protein serine/threonine kinase activity"/>
    <property type="evidence" value="ECO:0000314"/>
    <property type="project" value="UniProtKB"/>
</dbReference>
<dbReference type="GO" id="GO:0071474">
    <property type="term" value="P:cellular hyperosmotic response"/>
    <property type="evidence" value="ECO:0000314"/>
    <property type="project" value="SGD"/>
</dbReference>
<dbReference type="GO" id="GO:0071470">
    <property type="term" value="P:cellular response to osmotic stress"/>
    <property type="evidence" value="ECO:0000314"/>
    <property type="project" value="SGD"/>
</dbReference>
<dbReference type="GO" id="GO:0034599">
    <property type="term" value="P:cellular response to oxidative stress"/>
    <property type="evidence" value="ECO:0000318"/>
    <property type="project" value="GO_Central"/>
</dbReference>
<dbReference type="GO" id="GO:0006972">
    <property type="term" value="P:hyperosmotic response"/>
    <property type="evidence" value="ECO:0000315"/>
    <property type="project" value="SGD"/>
</dbReference>
<dbReference type="GO" id="GO:0001100">
    <property type="term" value="P:negative regulation of exit from mitosis"/>
    <property type="evidence" value="ECO:0000314"/>
    <property type="project" value="SGD"/>
</dbReference>
<dbReference type="GO" id="GO:0007231">
    <property type="term" value="P:osmosensory signaling pathway"/>
    <property type="evidence" value="ECO:0000315"/>
    <property type="project" value="SGD"/>
</dbReference>
<dbReference type="GO" id="GO:0045944">
    <property type="term" value="P:positive regulation of transcription by RNA polymerase II"/>
    <property type="evidence" value="ECO:0000314"/>
    <property type="project" value="SGD"/>
</dbReference>
<dbReference type="GO" id="GO:0016241">
    <property type="term" value="P:regulation of macroautophagy"/>
    <property type="evidence" value="ECO:0000315"/>
    <property type="project" value="SGD"/>
</dbReference>
<dbReference type="GO" id="GO:0033262">
    <property type="term" value="P:regulation of nuclear cell cycle DNA replication"/>
    <property type="evidence" value="ECO:0000314"/>
    <property type="project" value="SGD"/>
</dbReference>
<dbReference type="GO" id="GO:0006357">
    <property type="term" value="P:regulation of transcription by RNA polymerase II"/>
    <property type="evidence" value="ECO:0000314"/>
    <property type="project" value="SGD"/>
</dbReference>
<dbReference type="GO" id="GO:0051403">
    <property type="term" value="P:stress-activated MAPK cascade"/>
    <property type="evidence" value="ECO:0000318"/>
    <property type="project" value="GO_Central"/>
</dbReference>
<dbReference type="CDD" id="cd07856">
    <property type="entry name" value="STKc_Sty1_Hog1"/>
    <property type="match status" value="1"/>
</dbReference>
<dbReference type="FunFam" id="1.10.510.10:FF:000049">
    <property type="entry name" value="Mitogen-activated protein kinase"/>
    <property type="match status" value="1"/>
</dbReference>
<dbReference type="FunFam" id="3.30.200.20:FF:000050">
    <property type="entry name" value="Mitogen-activated protein kinase"/>
    <property type="match status" value="1"/>
</dbReference>
<dbReference type="Gene3D" id="3.30.200.20">
    <property type="entry name" value="Phosphorylase Kinase, domain 1"/>
    <property type="match status" value="1"/>
</dbReference>
<dbReference type="Gene3D" id="1.10.510.10">
    <property type="entry name" value="Transferase(Phosphotransferase) domain 1"/>
    <property type="match status" value="1"/>
</dbReference>
<dbReference type="InterPro" id="IPR011009">
    <property type="entry name" value="Kinase-like_dom_sf"/>
</dbReference>
<dbReference type="InterPro" id="IPR050117">
    <property type="entry name" value="MAP_kinase"/>
</dbReference>
<dbReference type="InterPro" id="IPR003527">
    <property type="entry name" value="MAP_kinase_CS"/>
</dbReference>
<dbReference type="InterPro" id="IPR008352">
    <property type="entry name" value="MAPK_p38-like"/>
</dbReference>
<dbReference type="InterPro" id="IPR038783">
    <property type="entry name" value="MAPK_Sty1/Hog1"/>
</dbReference>
<dbReference type="InterPro" id="IPR000719">
    <property type="entry name" value="Prot_kinase_dom"/>
</dbReference>
<dbReference type="InterPro" id="IPR017441">
    <property type="entry name" value="Protein_kinase_ATP_BS"/>
</dbReference>
<dbReference type="InterPro" id="IPR008271">
    <property type="entry name" value="Ser/Thr_kinase_AS"/>
</dbReference>
<dbReference type="PANTHER" id="PTHR24055">
    <property type="entry name" value="MITOGEN-ACTIVATED PROTEIN KINASE"/>
    <property type="match status" value="1"/>
</dbReference>
<dbReference type="Pfam" id="PF00069">
    <property type="entry name" value="Pkinase"/>
    <property type="match status" value="1"/>
</dbReference>
<dbReference type="PRINTS" id="PR01773">
    <property type="entry name" value="P38MAPKINASE"/>
</dbReference>
<dbReference type="SMART" id="SM00220">
    <property type="entry name" value="S_TKc"/>
    <property type="match status" value="1"/>
</dbReference>
<dbReference type="SUPFAM" id="SSF56112">
    <property type="entry name" value="Protein kinase-like (PK-like)"/>
    <property type="match status" value="1"/>
</dbReference>
<dbReference type="PROSITE" id="PS01351">
    <property type="entry name" value="MAPK"/>
    <property type="match status" value="1"/>
</dbReference>
<dbReference type="PROSITE" id="PS00107">
    <property type="entry name" value="PROTEIN_KINASE_ATP"/>
    <property type="match status" value="1"/>
</dbReference>
<dbReference type="PROSITE" id="PS50011">
    <property type="entry name" value="PROTEIN_KINASE_DOM"/>
    <property type="match status" value="1"/>
</dbReference>
<dbReference type="PROSITE" id="PS00108">
    <property type="entry name" value="PROTEIN_KINASE_ST"/>
    <property type="match status" value="1"/>
</dbReference>
<feature type="initiator methionine" description="Removed" evidence="54">
    <location>
        <position position="1"/>
    </location>
</feature>
<feature type="chain" id="PRO_0000186331" description="Mitogen-activated protein kinase HOG1">
    <location>
        <begin position="2"/>
        <end position="435"/>
    </location>
</feature>
<feature type="domain" description="Protein kinase" evidence="2">
    <location>
        <begin position="23"/>
        <end position="302"/>
    </location>
</feature>
<feature type="short sequence motif" description="TXY">
    <location>
        <begin position="174"/>
        <end position="176"/>
    </location>
</feature>
<feature type="active site" description="Proton acceptor" evidence="2 3">
    <location>
        <position position="144"/>
    </location>
</feature>
<feature type="binding site" evidence="2">
    <location>
        <begin position="29"/>
        <end position="37"/>
    </location>
    <ligand>
        <name>ATP</name>
        <dbReference type="ChEBI" id="CHEBI:30616"/>
    </ligand>
</feature>
<feature type="binding site" evidence="2">
    <location>
        <position position="52"/>
    </location>
    <ligand>
        <name>ATP</name>
        <dbReference type="ChEBI" id="CHEBI:30616"/>
    </ligand>
</feature>
<feature type="binding site" description="covalent" evidence="43">
    <location>
        <position position="156"/>
    </location>
    <ligand>
        <name>arsenite</name>
        <dbReference type="ChEBI" id="CHEBI:29242"/>
    </ligand>
</feature>
<feature type="binding site" description="covalent" evidence="43">
    <location>
        <position position="161"/>
    </location>
    <ligand>
        <name>arsenite</name>
        <dbReference type="ChEBI" id="CHEBI:29242"/>
    </ligand>
</feature>
<feature type="binding site" description="covalent" evidence="43">
    <location>
        <position position="205"/>
    </location>
    <ligand>
        <name>arsenite</name>
        <dbReference type="ChEBI" id="CHEBI:29242"/>
    </ligand>
</feature>
<feature type="modified residue" description="N-acetylthreonine" evidence="54">
    <location>
        <position position="2"/>
    </location>
</feature>
<feature type="modified residue" description="Phosphothreonine; by PBS2" evidence="18">
    <location>
        <position position="174"/>
    </location>
</feature>
<feature type="modified residue" description="Phosphotyrosine; by PBS2" evidence="18 53">
    <location>
        <position position="176"/>
    </location>
</feature>
<feature type="mutagenesis site" description="Impairs catalytic activity, nuclear translocation, expression of CTT1 and increases sensitivity to osmotic shock." evidence="37 41 44 45 47">
    <original>K</original>
    <variation>R</variation>
    <location>
        <position position="52"/>
    </location>
</feature>
<feature type="mutagenesis site" description="Activates HOG1 in a constitutive manner, without the need of a stimulating stress." evidence="10">
    <original>Y</original>
    <variation>H</variation>
    <location>
        <position position="68"/>
    </location>
</feature>
<feature type="mutagenesis site" description="Impairs catalytic activity and nuclear translocation." evidence="37 44">
    <original>D</original>
    <variation>A</variation>
    <location>
        <position position="144"/>
    </location>
</feature>
<feature type="mutagenesis site" description="Leads to sensitivity to arsenic." evidence="43">
    <original>C</original>
    <variation>S</variation>
    <location>
        <position position="156"/>
    </location>
</feature>
<feature type="mutagenesis site" description="Leads to sensitivity to arsenic." evidence="43">
    <original>C</original>
    <variation>S</variation>
    <location>
        <position position="161"/>
    </location>
</feature>
<feature type="mutagenesis site" description="Activates HOG1 in a constitutive manner, without the need of a stimulating stress." evidence="10">
    <original>D</original>
    <variation>A</variation>
    <location>
        <position position="170"/>
    </location>
</feature>
<feature type="mutagenesis site" description="Impairs catalytic activity, expression of CTT1 and increases sensitivity to osmotic shock." evidence="18 45">
    <original>T</original>
    <variation>A</variation>
    <location>
        <position position="174"/>
    </location>
</feature>
<feature type="mutagenesis site" description="Impairs expression of CTT1 and increases sensitivity to osmotic shock." evidence="18 45">
    <original>Y</original>
    <variation>F</variation>
    <location>
        <position position="176"/>
    </location>
</feature>
<feature type="mutagenesis site" description="Leads to sensitivity to arsenic." evidence="43">
    <original>C</original>
    <variation>S</variation>
    <location>
        <position position="205"/>
    </location>
</feature>
<feature type="mutagenesis site" description="Activates HOG1 in a constitutive manner, without the need of a stimulating stress." evidence="10">
    <original>A</original>
    <variation>T</variation>
    <location>
        <position position="314"/>
    </location>
</feature>
<feature type="mutagenesis site" description="Activates HOG1 in a constitutive manner, without the need of a stimulating stress." evidence="10">
    <original>F</original>
    <variation>L</variation>
    <variation>S</variation>
    <location>
        <position position="318"/>
    </location>
</feature>
<feature type="mutagenesis site" description="Activates HOG1 in a constitutive manner, without the need of a stimulating stress." evidence="10">
    <original>W</original>
    <variation>R</variation>
    <location>
        <position position="320"/>
    </location>
</feature>
<feature type="mutagenesis site" description="Activates HOG1 in a constitutive manner, without the need of a stimulating stress." evidence="10">
    <original>F</original>
    <variation>L</variation>
    <location>
        <position position="322"/>
    </location>
</feature>
<feature type="mutagenesis site" description="Activates HOG1 in a constitutive manner, without the need of a stimulating stress." evidence="10">
    <original>W</original>
    <variation>R</variation>
    <location>
        <position position="332"/>
    </location>
</feature>
<feature type="mutagenesis site" description="Activates HOG1 in a constitutive manner, without the need of a stimulating stress." evidence="10">
    <original>N</original>
    <variation>D</variation>
    <location>
        <position position="391"/>
    </location>
</feature>
<feature type="sequence conflict" description="In Ref. 2; AAB67558." evidence="52" ref="2">
    <original>R</original>
    <variation>G</variation>
    <location>
        <position position="9"/>
    </location>
</feature>
<feature type="sequence conflict" description="In Ref. 1; AAA34680." evidence="52" ref="1">
    <original>VSDHVAANDTITDYGNQAIQYANEFQQ</original>
    <variation>GQRSCSCK</variation>
    <location>
        <begin position="409"/>
        <end position="435"/>
    </location>
</feature>
<evidence type="ECO:0000250" key="1">
    <source>
        <dbReference type="UniProtKB" id="Q16539"/>
    </source>
</evidence>
<evidence type="ECO:0000255" key="2">
    <source>
        <dbReference type="PROSITE-ProRule" id="PRU00159"/>
    </source>
</evidence>
<evidence type="ECO:0000255" key="3">
    <source>
        <dbReference type="PROSITE-ProRule" id="PRU10027"/>
    </source>
</evidence>
<evidence type="ECO:0000269" key="4">
    <source>
    </source>
</evidence>
<evidence type="ECO:0000269" key="5">
    <source>
    </source>
</evidence>
<evidence type="ECO:0000269" key="6">
    <source>
    </source>
</evidence>
<evidence type="ECO:0000269" key="7">
    <source>
    </source>
</evidence>
<evidence type="ECO:0000269" key="8">
    <source>
    </source>
</evidence>
<evidence type="ECO:0000269" key="9">
    <source>
    </source>
</evidence>
<evidence type="ECO:0000269" key="10">
    <source>
    </source>
</evidence>
<evidence type="ECO:0000269" key="11">
    <source>
    </source>
</evidence>
<evidence type="ECO:0000269" key="12">
    <source>
    </source>
</evidence>
<evidence type="ECO:0000269" key="13">
    <source>
    </source>
</evidence>
<evidence type="ECO:0000269" key="14">
    <source>
    </source>
</evidence>
<evidence type="ECO:0000269" key="15">
    <source>
    </source>
</evidence>
<evidence type="ECO:0000269" key="16">
    <source>
    </source>
</evidence>
<evidence type="ECO:0000269" key="17">
    <source>
    </source>
</evidence>
<evidence type="ECO:0000269" key="18">
    <source>
    </source>
</evidence>
<evidence type="ECO:0000269" key="19">
    <source>
    </source>
</evidence>
<evidence type="ECO:0000269" key="20">
    <source>
    </source>
</evidence>
<evidence type="ECO:0000269" key="21">
    <source>
    </source>
</evidence>
<evidence type="ECO:0000269" key="22">
    <source>
    </source>
</evidence>
<evidence type="ECO:0000269" key="23">
    <source>
    </source>
</evidence>
<evidence type="ECO:0000269" key="24">
    <source>
    </source>
</evidence>
<evidence type="ECO:0000269" key="25">
    <source>
    </source>
</evidence>
<evidence type="ECO:0000269" key="26">
    <source>
    </source>
</evidence>
<evidence type="ECO:0000269" key="27">
    <source>
    </source>
</evidence>
<evidence type="ECO:0000269" key="28">
    <source>
    </source>
</evidence>
<evidence type="ECO:0000269" key="29">
    <source>
    </source>
</evidence>
<evidence type="ECO:0000269" key="30">
    <source>
    </source>
</evidence>
<evidence type="ECO:0000269" key="31">
    <source>
    </source>
</evidence>
<evidence type="ECO:0000269" key="32">
    <source>
    </source>
</evidence>
<evidence type="ECO:0000269" key="33">
    <source>
    </source>
</evidence>
<evidence type="ECO:0000269" key="34">
    <source>
    </source>
</evidence>
<evidence type="ECO:0000269" key="35">
    <source>
    </source>
</evidence>
<evidence type="ECO:0000269" key="36">
    <source>
    </source>
</evidence>
<evidence type="ECO:0000269" key="37">
    <source>
    </source>
</evidence>
<evidence type="ECO:0000269" key="38">
    <source>
    </source>
</evidence>
<evidence type="ECO:0000269" key="39">
    <source>
    </source>
</evidence>
<evidence type="ECO:0000269" key="40">
    <source>
    </source>
</evidence>
<evidence type="ECO:0000269" key="41">
    <source>
    </source>
</evidence>
<evidence type="ECO:0000269" key="42">
    <source>
    </source>
</evidence>
<evidence type="ECO:0000269" key="43">
    <source>
    </source>
</evidence>
<evidence type="ECO:0000269" key="44">
    <source>
    </source>
</evidence>
<evidence type="ECO:0000269" key="45">
    <source>
    </source>
</evidence>
<evidence type="ECO:0000269" key="46">
    <source>
    </source>
</evidence>
<evidence type="ECO:0000269" key="47">
    <source>
    </source>
</evidence>
<evidence type="ECO:0000269" key="48">
    <source>
    </source>
</evidence>
<evidence type="ECO:0000269" key="49">
    <source>
    </source>
</evidence>
<evidence type="ECO:0000269" key="50">
    <source>
    </source>
</evidence>
<evidence type="ECO:0000269" key="51">
    <source>
    </source>
</evidence>
<evidence type="ECO:0000305" key="52"/>
<evidence type="ECO:0007744" key="53">
    <source>
    </source>
</evidence>
<evidence type="ECO:0007744" key="54">
    <source>
    </source>
</evidence>
<comment type="function">
    <text evidence="4 5 6 8 9 11 12 13 14 17 19 21 23 24 25 26 28 29 30 31 33 34 35 36 37 38 39 40 41 42 43 44 45 46 47 50 51">Proline-directed serine/threonine-protein kinase involved in a signal transduction pathway that is activated by changes in the osmolarity of the extracellular environment (PubMed:10198063, PubMed:10970855, PubMed:11230135, PubMed:11796711, PubMed:12743037, PubMed:14680476, PubMed:16321140, PubMed:16896207, PubMed:17220467, PubMed:17346711, PubMed:17363249, PubMed:38270553, PubMed:7523111, PubMed:8662716, PubMed:8943326). Controls osmotic regulation of transcription via the stress response element (STRE) in promoters of target genes (PubMed:11336700, PubMed:7523111). Upon osmotic shock, associates with the SKO1-SSN6-TUP1 complex, phosphorylates SKO1, and converts it into an activator that subsequently recruits Swi/Snf and SAGA complexes (PubMed:11230135, PubMed:12086627, PubMed:17429070). Activates the SMP1 transcription factor and the RCK2 kinase, both also involved in the regulation of the expression of a subset of osmotic stress-related genes (PubMed:10805732, PubMed:12482976). Phosphorylation of HSL1 by HOG1 leads to a G2 arrest essential for cell survival at high osmolarity (PubMed:16688223). Also mediates cell-cycle arrest in G1 phase by the dual targeting of SIC1 (PubMed:15448699). Phosphorylates methyltransferase DOT1 at least on 'Ser-565' and 'Thr-576' (PubMed:38270553). Regulates MFA2 ARE-mediated translation in response to carbon source (PubMed:16260593). Targets RPD3 histone deacetylase to osmoresponsive promoters to induce gene expression on stress (PubMed:14737171). Required for the Golgi apparatus localization of MNN1 (PubMed:9817752). Plays an essential role in maintaining water homeostasis, arsenite detoxification, copper-resistance, cold-resistance, hydrogen peroxide response, adaptation to citric acid stress, and repression of the mating pathway activity (PubMed:11136466, PubMed:11922108, PubMed:15060153, PubMed:15177185, PubMed:15773992, PubMed:16371351, PubMed:16790423, PubMed:16857590, PubMed:16885417, PubMed:16920868, PubMed:9744864). Functions as an arsenic sensor and effector via direct binding to arsenic and subsequent phosphorylation of the ARR1 transcription factor (PubMed:31772124).</text>
</comment>
<comment type="catalytic activity">
    <reaction evidence="5 9 17 44">
        <text>L-seryl-[protein] + ATP = O-phospho-L-seryl-[protein] + ADP + H(+)</text>
        <dbReference type="Rhea" id="RHEA:17989"/>
        <dbReference type="Rhea" id="RHEA-COMP:9863"/>
        <dbReference type="Rhea" id="RHEA-COMP:11604"/>
        <dbReference type="ChEBI" id="CHEBI:15378"/>
        <dbReference type="ChEBI" id="CHEBI:29999"/>
        <dbReference type="ChEBI" id="CHEBI:30616"/>
        <dbReference type="ChEBI" id="CHEBI:83421"/>
        <dbReference type="ChEBI" id="CHEBI:456216"/>
        <dbReference type="EC" id="2.7.11.24"/>
    </reaction>
    <physiologicalReaction direction="left-to-right" evidence="44">
        <dbReference type="Rhea" id="RHEA:17990"/>
    </physiologicalReaction>
</comment>
<comment type="catalytic activity">
    <reaction evidence="17 26 44">
        <text>L-threonyl-[protein] + ATP = O-phospho-L-threonyl-[protein] + ADP + H(+)</text>
        <dbReference type="Rhea" id="RHEA:46608"/>
        <dbReference type="Rhea" id="RHEA-COMP:11060"/>
        <dbReference type="Rhea" id="RHEA-COMP:11605"/>
        <dbReference type="ChEBI" id="CHEBI:15378"/>
        <dbReference type="ChEBI" id="CHEBI:30013"/>
        <dbReference type="ChEBI" id="CHEBI:30616"/>
        <dbReference type="ChEBI" id="CHEBI:61977"/>
        <dbReference type="ChEBI" id="CHEBI:456216"/>
        <dbReference type="EC" id="2.7.11.24"/>
    </reaction>
    <physiologicalReaction direction="left-to-right" evidence="44">
        <dbReference type="Rhea" id="RHEA:46609"/>
    </physiologicalReaction>
</comment>
<comment type="cofactor">
    <cofactor evidence="1">
        <name>Mg(2+)</name>
        <dbReference type="ChEBI" id="CHEBI:18420"/>
    </cofactor>
</comment>
<comment type="activity regulation">
    <text evidence="7 15 16 22 48 49">Activated by tyrosine and threonine phosphorylation (PubMed:11113180, PubMed:12455951, PubMed:12477803, PubMed:9032256, PubMed:9211927). Inactivated by dephosphorylation via recruitment of PTC1 to the PBS2-HOG1 complex after adaptation to osmotic stress (PubMed:14685261). PTP2 and PTP3 inactivate HOG1 by dephosphorylating Tyr-176, while the PP2Cs PTC1 and PTC2 or PTC3 dephosphorylate Thr-174 in the activation loop (PubMed:11113180, PubMed:12455951, PubMed:12477803, PubMed:9032256, PubMed:9211927).</text>
</comment>
<comment type="subunit">
    <text evidence="5 9 17 19 23 26 35 39 48 49">Interacts with CDC37, HOT1, KIN28, PTP2, PTP3, RBP1, RCK2, RPD3, SIC1, SMP1 and SIN4.</text>
</comment>
<comment type="interaction">
    <interactant intactId="EBI-8437">
        <id>P32485</id>
    </interactant>
    <interactant intactId="EBI-27376">
        <id>Q03213</id>
        <label>HOT1</label>
    </interactant>
    <organismsDiffer>false</organismsDiffer>
    <experiments>4</experiments>
</comment>
<comment type="interaction">
    <interactant intactId="EBI-8437">
        <id>P32485</id>
    </interactant>
    <interactant intactId="EBI-9771">
        <id>P34244</id>
        <label>HSL1</label>
    </interactant>
    <organismsDiffer>false</organismsDiffer>
    <experiments>2</experiments>
</comment>
<comment type="interaction">
    <interactant intactId="EBI-8437">
        <id>P32485</id>
    </interactant>
    <interactant intactId="EBI-412442">
        <id>P25588</id>
        <label>MRC1</label>
    </interactant>
    <organismsDiffer>false</organismsDiffer>
    <experiments>4</experiments>
</comment>
<comment type="interaction">
    <interactant intactId="EBI-8437">
        <id>P32485</id>
    </interactant>
    <interactant intactId="EBI-14885">
        <id>P38623</id>
        <label>RCK2</label>
    </interactant>
    <organismsDiffer>false</organismsDiffer>
    <experiments>5</experiments>
</comment>
<comment type="interaction">
    <interactant intactId="EBI-8437">
        <id>P32485</id>
    </interactant>
    <interactant intactId="EBI-17127">
        <id>P38634</id>
        <label>SIC1</label>
    </interactant>
    <organismsDiffer>false</organismsDiffer>
    <experiments>4</experiments>
</comment>
<comment type="interaction">
    <interactant intactId="EBI-8437">
        <id>P32485</id>
    </interactant>
    <interactant intactId="EBI-18389">
        <id>P06784</id>
        <label>STE7</label>
    </interactant>
    <organismsDiffer>false</organismsDiffer>
    <experiments>2</experiments>
</comment>
<comment type="interaction">
    <interactant intactId="EBI-8437">
        <id>P32485</id>
    </interactant>
    <interactant intactId="EBI-19834">
        <id>Q01477</id>
        <label>UBP3</label>
    </interactant>
    <organismsDiffer>false</organismsDiffer>
    <experiments>3</experiments>
</comment>
<comment type="subcellular location">
    <subcellularLocation>
        <location>Cytoplasm</location>
    </subcellularLocation>
    <subcellularLocation>
        <location>Nucleus</location>
    </subcellularLocation>
    <text evidence="43">Predominantly cytoplasmic in unstressed cells but rapidly concentrates within the nucleus in response to hyperosmotic conditions and phosphorylation. Arsenic-binding promotes the nuclear localization (PubMed:31772124).</text>
</comment>
<comment type="induction">
    <text evidence="34">By osmotic stress, cold stress, citric acid, and in presence of bacterial lipopolysaccharides (LPS).</text>
</comment>
<comment type="domain">
    <text>The TXY motif contains the threonine and tyrosine residues whose phosphorylation activates the MAP kinases.</text>
</comment>
<comment type="PTM">
    <text evidence="44">Activated by PBS2-mediated concomitant phosphorylation at Thr-174 and Tyr-176.</text>
</comment>
<comment type="PTM">
    <text evidence="4 9 18 24 27 31 32 34 36 37 38 39 40 44 45">Dually phosphorylated on Thr-174 and Tyr-176, which activates the enzyme.</text>
</comment>
<comment type="disruption phenotype">
    <text evidence="43 44">Leads to sensitivity to osmotic stress (induced by NaCl, KCl, and sorbitol), actinomycin D (transcription inhibitor), galactose, sirolimus (rapamycin), UV irradiation, and methyl methanesulfonate (MMS).</text>
</comment>
<comment type="miscellaneous">
    <text evidence="20">Present with 6780 molecules/cell in log phase SD medium.</text>
</comment>
<comment type="similarity">
    <text evidence="2">Belongs to the protein kinase superfamily. Ser/Thr protein kinase family. MAP kinase subfamily. HOG1 sub-subfamily.</text>
</comment>